<dbReference type="EMBL" id="D31716">
    <property type="protein sequence ID" value="BAA06524.1"/>
    <property type="molecule type" value="mRNA"/>
</dbReference>
<dbReference type="EMBL" id="AK313631">
    <property type="protein sequence ID" value="BAG36390.1"/>
    <property type="molecule type" value="mRNA"/>
</dbReference>
<dbReference type="EMBL" id="AL162390">
    <property type="status" value="NOT_ANNOTATED_CDS"/>
    <property type="molecule type" value="Genomic_DNA"/>
</dbReference>
<dbReference type="EMBL" id="CH471089">
    <property type="protein sequence ID" value="EAW62503.1"/>
    <property type="molecule type" value="Genomic_DNA"/>
</dbReference>
<dbReference type="EMBL" id="BC069431">
    <property type="protein sequence ID" value="AAH69431.1"/>
    <property type="molecule type" value="mRNA"/>
</dbReference>
<dbReference type="EMBL" id="BC074879">
    <property type="protein sequence ID" value="AAH74879.1"/>
    <property type="molecule type" value="mRNA"/>
</dbReference>
<dbReference type="EMBL" id="BC074880">
    <property type="protein sequence ID" value="AAH74880.1"/>
    <property type="molecule type" value="mRNA"/>
</dbReference>
<dbReference type="EMBL" id="S72504">
    <property type="protein sequence ID" value="AAD14110.1"/>
    <property type="molecule type" value="mRNA"/>
</dbReference>
<dbReference type="CCDS" id="CCDS6633.1"/>
<dbReference type="PIR" id="I59602">
    <property type="entry name" value="I59602"/>
</dbReference>
<dbReference type="RefSeq" id="NP_001197.1">
    <property type="nucleotide sequence ID" value="NM_001206.4"/>
</dbReference>
<dbReference type="SMR" id="Q13886"/>
<dbReference type="BioGRID" id="107152">
    <property type="interactions" value="95"/>
</dbReference>
<dbReference type="ELM" id="Q13886"/>
<dbReference type="FunCoup" id="Q13886">
    <property type="interactions" value="304"/>
</dbReference>
<dbReference type="IntAct" id="Q13886">
    <property type="interactions" value="82"/>
</dbReference>
<dbReference type="STRING" id="9606.ENSP00000366330"/>
<dbReference type="iPTMnet" id="Q13886"/>
<dbReference type="PhosphoSitePlus" id="Q13886"/>
<dbReference type="BioMuta" id="KLF9"/>
<dbReference type="DMDM" id="3913177"/>
<dbReference type="jPOST" id="Q13886"/>
<dbReference type="MassIVE" id="Q13886"/>
<dbReference type="PaxDb" id="9606-ENSP00000366330"/>
<dbReference type="PeptideAtlas" id="Q13886"/>
<dbReference type="ProteomicsDB" id="59714"/>
<dbReference type="Antibodypedia" id="12411">
    <property type="antibodies" value="256 antibodies from 29 providers"/>
</dbReference>
<dbReference type="DNASU" id="687"/>
<dbReference type="Ensembl" id="ENST00000377126.4">
    <property type="protein sequence ID" value="ENSP00000366330.2"/>
    <property type="gene ID" value="ENSG00000119138.5"/>
</dbReference>
<dbReference type="GeneID" id="687"/>
<dbReference type="KEGG" id="hsa:687"/>
<dbReference type="MANE-Select" id="ENST00000377126.4">
    <property type="protein sequence ID" value="ENSP00000366330.2"/>
    <property type="RefSeq nucleotide sequence ID" value="NM_001206.4"/>
    <property type="RefSeq protein sequence ID" value="NP_001197.1"/>
</dbReference>
<dbReference type="UCSC" id="uc004aht.4">
    <property type="organism name" value="human"/>
</dbReference>
<dbReference type="AGR" id="HGNC:1123"/>
<dbReference type="CTD" id="687"/>
<dbReference type="DisGeNET" id="687"/>
<dbReference type="GeneCards" id="KLF9"/>
<dbReference type="HGNC" id="HGNC:1123">
    <property type="gene designation" value="KLF9"/>
</dbReference>
<dbReference type="HPA" id="ENSG00000119138">
    <property type="expression patterns" value="Low tissue specificity"/>
</dbReference>
<dbReference type="MIM" id="602902">
    <property type="type" value="gene"/>
</dbReference>
<dbReference type="neXtProt" id="NX_Q13886"/>
<dbReference type="OpenTargets" id="ENSG00000119138"/>
<dbReference type="PharmGKB" id="PA25444"/>
<dbReference type="VEuPathDB" id="HostDB:ENSG00000119138"/>
<dbReference type="eggNOG" id="KOG1721">
    <property type="taxonomic scope" value="Eukaryota"/>
</dbReference>
<dbReference type="GeneTree" id="ENSGT00940000160905"/>
<dbReference type="HOGENOM" id="CLU_002678_33_2_1"/>
<dbReference type="InParanoid" id="Q13886"/>
<dbReference type="OMA" id="GPNKEHH"/>
<dbReference type="OrthoDB" id="6365676at2759"/>
<dbReference type="PAN-GO" id="Q13886">
    <property type="GO annotations" value="3 GO annotations based on evolutionary models"/>
</dbReference>
<dbReference type="PhylomeDB" id="Q13886"/>
<dbReference type="TreeFam" id="TF351003"/>
<dbReference type="PathwayCommons" id="Q13886"/>
<dbReference type="SignaLink" id="Q13886"/>
<dbReference type="SIGNOR" id="Q13886"/>
<dbReference type="BioGRID-ORCS" id="687">
    <property type="hits" value="14 hits in 1176 CRISPR screens"/>
</dbReference>
<dbReference type="ChiTaRS" id="KLF9">
    <property type="organism name" value="human"/>
</dbReference>
<dbReference type="GeneWiki" id="KLF9"/>
<dbReference type="GenomeRNAi" id="687"/>
<dbReference type="Pharos" id="Q13886">
    <property type="development level" value="Tbio"/>
</dbReference>
<dbReference type="PRO" id="PR:Q13886"/>
<dbReference type="Proteomes" id="UP000005640">
    <property type="component" value="Chromosome 9"/>
</dbReference>
<dbReference type="RNAct" id="Q13886">
    <property type="molecule type" value="protein"/>
</dbReference>
<dbReference type="Bgee" id="ENSG00000119138">
    <property type="expression patterns" value="Expressed in calcaneal tendon and 205 other cell types or tissues"/>
</dbReference>
<dbReference type="ExpressionAtlas" id="Q13886">
    <property type="expression patterns" value="baseline and differential"/>
</dbReference>
<dbReference type="GO" id="GO:0000785">
    <property type="term" value="C:chromatin"/>
    <property type="evidence" value="ECO:0000247"/>
    <property type="project" value="NTNU_SB"/>
</dbReference>
<dbReference type="GO" id="GO:0005829">
    <property type="term" value="C:cytosol"/>
    <property type="evidence" value="ECO:0000314"/>
    <property type="project" value="HPA"/>
</dbReference>
<dbReference type="GO" id="GO:0005654">
    <property type="term" value="C:nucleoplasm"/>
    <property type="evidence" value="ECO:0000314"/>
    <property type="project" value="HPA"/>
</dbReference>
<dbReference type="GO" id="GO:0005634">
    <property type="term" value="C:nucleus"/>
    <property type="evidence" value="ECO:0000314"/>
    <property type="project" value="UniProtKB"/>
</dbReference>
<dbReference type="GO" id="GO:0005886">
    <property type="term" value="C:plasma membrane"/>
    <property type="evidence" value="ECO:0000314"/>
    <property type="project" value="HPA"/>
</dbReference>
<dbReference type="GO" id="GO:0003700">
    <property type="term" value="F:DNA-binding transcription factor activity"/>
    <property type="evidence" value="ECO:0000304"/>
    <property type="project" value="ProtInc"/>
</dbReference>
<dbReference type="GO" id="GO:0000981">
    <property type="term" value="F:DNA-binding transcription factor activity, RNA polymerase II-specific"/>
    <property type="evidence" value="ECO:0000247"/>
    <property type="project" value="NTNU_SB"/>
</dbReference>
<dbReference type="GO" id="GO:0000978">
    <property type="term" value="F:RNA polymerase II cis-regulatory region sequence-specific DNA binding"/>
    <property type="evidence" value="ECO:0000318"/>
    <property type="project" value="GO_Central"/>
</dbReference>
<dbReference type="GO" id="GO:0008270">
    <property type="term" value="F:zinc ion binding"/>
    <property type="evidence" value="ECO:0007669"/>
    <property type="project" value="UniProtKB-KW"/>
</dbReference>
<dbReference type="GO" id="GO:0071387">
    <property type="term" value="P:cellular response to cortisol stimulus"/>
    <property type="evidence" value="ECO:0000314"/>
    <property type="project" value="UniProtKB"/>
</dbReference>
<dbReference type="GO" id="GO:0007623">
    <property type="term" value="P:circadian rhythm"/>
    <property type="evidence" value="ECO:0000270"/>
    <property type="project" value="UniProtKB"/>
</dbReference>
<dbReference type="GO" id="GO:0010839">
    <property type="term" value="P:negative regulation of keratinocyte proliferation"/>
    <property type="evidence" value="ECO:0000315"/>
    <property type="project" value="UniProtKB"/>
</dbReference>
<dbReference type="GO" id="GO:0006357">
    <property type="term" value="P:regulation of transcription by RNA polymerase II"/>
    <property type="evidence" value="ECO:0000318"/>
    <property type="project" value="GO_Central"/>
</dbReference>
<dbReference type="CDD" id="cd21578">
    <property type="entry name" value="KLF9_N"/>
    <property type="match status" value="1"/>
</dbReference>
<dbReference type="FunFam" id="3.30.160.60:FF:000018">
    <property type="entry name" value="Krueppel-like factor 15"/>
    <property type="match status" value="1"/>
</dbReference>
<dbReference type="FunFam" id="3.30.160.60:FF:000232">
    <property type="entry name" value="Krueppel-like factor 9"/>
    <property type="match status" value="1"/>
</dbReference>
<dbReference type="FunFam" id="3.30.160.60:FF:000521">
    <property type="entry name" value="Krueppel-like factor 9"/>
    <property type="match status" value="1"/>
</dbReference>
<dbReference type="Gene3D" id="3.30.160.60">
    <property type="entry name" value="Classic Zinc Finger"/>
    <property type="match status" value="3"/>
</dbReference>
<dbReference type="InterPro" id="IPR036236">
    <property type="entry name" value="Znf_C2H2_sf"/>
</dbReference>
<dbReference type="InterPro" id="IPR013087">
    <property type="entry name" value="Znf_C2H2_type"/>
</dbReference>
<dbReference type="PANTHER" id="PTHR23235:SF132">
    <property type="entry name" value="KRUEPPEL-LIKE FACTOR 9"/>
    <property type="match status" value="1"/>
</dbReference>
<dbReference type="PANTHER" id="PTHR23235">
    <property type="entry name" value="KRUEPPEL-LIKE TRANSCRIPTION FACTOR"/>
    <property type="match status" value="1"/>
</dbReference>
<dbReference type="Pfam" id="PF00096">
    <property type="entry name" value="zf-C2H2"/>
    <property type="match status" value="3"/>
</dbReference>
<dbReference type="SMART" id="SM00355">
    <property type="entry name" value="ZnF_C2H2"/>
    <property type="match status" value="3"/>
</dbReference>
<dbReference type="SUPFAM" id="SSF57667">
    <property type="entry name" value="beta-beta-alpha zinc fingers"/>
    <property type="match status" value="2"/>
</dbReference>
<dbReference type="PROSITE" id="PS00028">
    <property type="entry name" value="ZINC_FINGER_C2H2_1"/>
    <property type="match status" value="3"/>
</dbReference>
<dbReference type="PROSITE" id="PS50157">
    <property type="entry name" value="ZINC_FINGER_C2H2_2"/>
    <property type="match status" value="3"/>
</dbReference>
<accession>Q13886</accession>
<accession>B2R943</accession>
<accession>Q16196</accession>
<evidence type="ECO:0000255" key="1">
    <source>
        <dbReference type="PROSITE-ProRule" id="PRU00042"/>
    </source>
</evidence>
<evidence type="ECO:0000256" key="2">
    <source>
        <dbReference type="SAM" id="MobiDB-lite"/>
    </source>
</evidence>
<evidence type="ECO:0000269" key="3">
    <source>
    </source>
</evidence>
<evidence type="ECO:0000269" key="4">
    <source>
    </source>
</evidence>
<evidence type="ECO:0000305" key="5"/>
<evidence type="ECO:0007744" key="6">
    <source>
    </source>
</evidence>
<sequence length="244" mass="27235">MSAAAYMDFVAAQCLVSISNRAAVPEHGVAPDAERLRLPEREVTKEHGDPGDTWKDYCTLVTIAKSLLDLNKYRPIQTPSVCSDSLESPDEDMGSDSDVTTESGSSPSHSPEERQDPGSAPSPLSLLHPGVAAKGKHASEKRHKCPYSGCGKVYGKSSHLKAHYRVHTGERPFPCTWPDCLKKFSRSDELTRHYRTHTGEKQFRCPLCEKRFMRSDHLTKHARRHTEFHPSMIKRSKKALANAL</sequence>
<reference key="1">
    <citation type="journal article" date="1993" name="Somat. Cell Mol. Genet.">
        <title>Chromosomal localization and cDNA sequence of human BTEB, a GC box binding protein.</title>
        <authorList>
            <person name="Ohe N."/>
            <person name="Yamasaki Y."/>
            <person name="Sogawa K."/>
            <person name="Inazawa J."/>
            <person name="Ariyama T."/>
            <person name="Oshimura M."/>
            <person name="Fujii-Kuriyama Y."/>
        </authorList>
    </citation>
    <scope>NUCLEOTIDE SEQUENCE [MRNA]</scope>
</reference>
<reference key="2">
    <citation type="journal article" date="2004" name="Nat. Genet.">
        <title>Complete sequencing and characterization of 21,243 full-length human cDNAs.</title>
        <authorList>
            <person name="Ota T."/>
            <person name="Suzuki Y."/>
            <person name="Nishikawa T."/>
            <person name="Otsuki T."/>
            <person name="Sugiyama T."/>
            <person name="Irie R."/>
            <person name="Wakamatsu A."/>
            <person name="Hayashi K."/>
            <person name="Sato H."/>
            <person name="Nagai K."/>
            <person name="Kimura K."/>
            <person name="Makita H."/>
            <person name="Sekine M."/>
            <person name="Obayashi M."/>
            <person name="Nishi T."/>
            <person name="Shibahara T."/>
            <person name="Tanaka T."/>
            <person name="Ishii S."/>
            <person name="Yamamoto J."/>
            <person name="Saito K."/>
            <person name="Kawai Y."/>
            <person name="Isono Y."/>
            <person name="Nakamura Y."/>
            <person name="Nagahari K."/>
            <person name="Murakami K."/>
            <person name="Yasuda T."/>
            <person name="Iwayanagi T."/>
            <person name="Wagatsuma M."/>
            <person name="Shiratori A."/>
            <person name="Sudo H."/>
            <person name="Hosoiri T."/>
            <person name="Kaku Y."/>
            <person name="Kodaira H."/>
            <person name="Kondo H."/>
            <person name="Sugawara M."/>
            <person name="Takahashi M."/>
            <person name="Kanda K."/>
            <person name="Yokoi T."/>
            <person name="Furuya T."/>
            <person name="Kikkawa E."/>
            <person name="Omura Y."/>
            <person name="Abe K."/>
            <person name="Kamihara K."/>
            <person name="Katsuta N."/>
            <person name="Sato K."/>
            <person name="Tanikawa M."/>
            <person name="Yamazaki M."/>
            <person name="Ninomiya K."/>
            <person name="Ishibashi T."/>
            <person name="Yamashita H."/>
            <person name="Murakawa K."/>
            <person name="Fujimori K."/>
            <person name="Tanai H."/>
            <person name="Kimata M."/>
            <person name="Watanabe M."/>
            <person name="Hiraoka S."/>
            <person name="Chiba Y."/>
            <person name="Ishida S."/>
            <person name="Ono Y."/>
            <person name="Takiguchi S."/>
            <person name="Watanabe S."/>
            <person name="Yosida M."/>
            <person name="Hotuta T."/>
            <person name="Kusano J."/>
            <person name="Kanehori K."/>
            <person name="Takahashi-Fujii A."/>
            <person name="Hara H."/>
            <person name="Tanase T.-O."/>
            <person name="Nomura Y."/>
            <person name="Togiya S."/>
            <person name="Komai F."/>
            <person name="Hara R."/>
            <person name="Takeuchi K."/>
            <person name="Arita M."/>
            <person name="Imose N."/>
            <person name="Musashino K."/>
            <person name="Yuuki H."/>
            <person name="Oshima A."/>
            <person name="Sasaki N."/>
            <person name="Aotsuka S."/>
            <person name="Yoshikawa Y."/>
            <person name="Matsunawa H."/>
            <person name="Ichihara T."/>
            <person name="Shiohata N."/>
            <person name="Sano S."/>
            <person name="Moriya S."/>
            <person name="Momiyama H."/>
            <person name="Satoh N."/>
            <person name="Takami S."/>
            <person name="Terashima Y."/>
            <person name="Suzuki O."/>
            <person name="Nakagawa S."/>
            <person name="Senoh A."/>
            <person name="Mizoguchi H."/>
            <person name="Goto Y."/>
            <person name="Shimizu F."/>
            <person name="Wakebe H."/>
            <person name="Hishigaki H."/>
            <person name="Watanabe T."/>
            <person name="Sugiyama A."/>
            <person name="Takemoto M."/>
            <person name="Kawakami B."/>
            <person name="Yamazaki M."/>
            <person name="Watanabe K."/>
            <person name="Kumagai A."/>
            <person name="Itakura S."/>
            <person name="Fukuzumi Y."/>
            <person name="Fujimori Y."/>
            <person name="Komiyama M."/>
            <person name="Tashiro H."/>
            <person name="Tanigami A."/>
            <person name="Fujiwara T."/>
            <person name="Ono T."/>
            <person name="Yamada K."/>
            <person name="Fujii Y."/>
            <person name="Ozaki K."/>
            <person name="Hirao M."/>
            <person name="Ohmori Y."/>
            <person name="Kawabata A."/>
            <person name="Hikiji T."/>
            <person name="Kobatake N."/>
            <person name="Inagaki H."/>
            <person name="Ikema Y."/>
            <person name="Okamoto S."/>
            <person name="Okitani R."/>
            <person name="Kawakami T."/>
            <person name="Noguchi S."/>
            <person name="Itoh T."/>
            <person name="Shigeta K."/>
            <person name="Senba T."/>
            <person name="Matsumura K."/>
            <person name="Nakajima Y."/>
            <person name="Mizuno T."/>
            <person name="Morinaga M."/>
            <person name="Sasaki M."/>
            <person name="Togashi T."/>
            <person name="Oyama M."/>
            <person name="Hata H."/>
            <person name="Watanabe M."/>
            <person name="Komatsu T."/>
            <person name="Mizushima-Sugano J."/>
            <person name="Satoh T."/>
            <person name="Shirai Y."/>
            <person name="Takahashi Y."/>
            <person name="Nakagawa K."/>
            <person name="Okumura K."/>
            <person name="Nagase T."/>
            <person name="Nomura N."/>
            <person name="Kikuchi H."/>
            <person name="Masuho Y."/>
            <person name="Yamashita R."/>
            <person name="Nakai K."/>
            <person name="Yada T."/>
            <person name="Nakamura Y."/>
            <person name="Ohara O."/>
            <person name="Isogai T."/>
            <person name="Sugano S."/>
        </authorList>
    </citation>
    <scope>NUCLEOTIDE SEQUENCE [LARGE SCALE MRNA]</scope>
    <source>
        <tissue>Trachea</tissue>
    </source>
</reference>
<reference key="3">
    <citation type="journal article" date="2004" name="Nature">
        <title>DNA sequence and analysis of human chromosome 9.</title>
        <authorList>
            <person name="Humphray S.J."/>
            <person name="Oliver K."/>
            <person name="Hunt A.R."/>
            <person name="Plumb R.W."/>
            <person name="Loveland J.E."/>
            <person name="Howe K.L."/>
            <person name="Andrews T.D."/>
            <person name="Searle S."/>
            <person name="Hunt S.E."/>
            <person name="Scott C.E."/>
            <person name="Jones M.C."/>
            <person name="Ainscough R."/>
            <person name="Almeida J.P."/>
            <person name="Ambrose K.D."/>
            <person name="Ashwell R.I.S."/>
            <person name="Babbage A.K."/>
            <person name="Babbage S."/>
            <person name="Bagguley C.L."/>
            <person name="Bailey J."/>
            <person name="Banerjee R."/>
            <person name="Barker D.J."/>
            <person name="Barlow K.F."/>
            <person name="Bates K."/>
            <person name="Beasley H."/>
            <person name="Beasley O."/>
            <person name="Bird C.P."/>
            <person name="Bray-Allen S."/>
            <person name="Brown A.J."/>
            <person name="Brown J.Y."/>
            <person name="Burford D."/>
            <person name="Burrill W."/>
            <person name="Burton J."/>
            <person name="Carder C."/>
            <person name="Carter N.P."/>
            <person name="Chapman J.C."/>
            <person name="Chen Y."/>
            <person name="Clarke G."/>
            <person name="Clark S.Y."/>
            <person name="Clee C.M."/>
            <person name="Clegg S."/>
            <person name="Collier R.E."/>
            <person name="Corby N."/>
            <person name="Crosier M."/>
            <person name="Cummings A.T."/>
            <person name="Davies J."/>
            <person name="Dhami P."/>
            <person name="Dunn M."/>
            <person name="Dutta I."/>
            <person name="Dyer L.W."/>
            <person name="Earthrowl M.E."/>
            <person name="Faulkner L."/>
            <person name="Fleming C.J."/>
            <person name="Frankish A."/>
            <person name="Frankland J.A."/>
            <person name="French L."/>
            <person name="Fricker D.G."/>
            <person name="Garner P."/>
            <person name="Garnett J."/>
            <person name="Ghori J."/>
            <person name="Gilbert J.G.R."/>
            <person name="Glison C."/>
            <person name="Grafham D.V."/>
            <person name="Gribble S."/>
            <person name="Griffiths C."/>
            <person name="Griffiths-Jones S."/>
            <person name="Grocock R."/>
            <person name="Guy J."/>
            <person name="Hall R.E."/>
            <person name="Hammond S."/>
            <person name="Harley J.L."/>
            <person name="Harrison E.S.I."/>
            <person name="Hart E.A."/>
            <person name="Heath P.D."/>
            <person name="Henderson C.D."/>
            <person name="Hopkins B.L."/>
            <person name="Howard P.J."/>
            <person name="Howden P.J."/>
            <person name="Huckle E."/>
            <person name="Johnson C."/>
            <person name="Johnson D."/>
            <person name="Joy A.A."/>
            <person name="Kay M."/>
            <person name="Keenan S."/>
            <person name="Kershaw J.K."/>
            <person name="Kimberley A.M."/>
            <person name="King A."/>
            <person name="Knights A."/>
            <person name="Laird G.K."/>
            <person name="Langford C."/>
            <person name="Lawlor S."/>
            <person name="Leongamornlert D.A."/>
            <person name="Leversha M."/>
            <person name="Lloyd C."/>
            <person name="Lloyd D.M."/>
            <person name="Lovell J."/>
            <person name="Martin S."/>
            <person name="Mashreghi-Mohammadi M."/>
            <person name="Matthews L."/>
            <person name="McLaren S."/>
            <person name="McLay K.E."/>
            <person name="McMurray A."/>
            <person name="Milne S."/>
            <person name="Nickerson T."/>
            <person name="Nisbett J."/>
            <person name="Nordsiek G."/>
            <person name="Pearce A.V."/>
            <person name="Peck A.I."/>
            <person name="Porter K.M."/>
            <person name="Pandian R."/>
            <person name="Pelan S."/>
            <person name="Phillimore B."/>
            <person name="Povey S."/>
            <person name="Ramsey Y."/>
            <person name="Rand V."/>
            <person name="Scharfe M."/>
            <person name="Sehra H.K."/>
            <person name="Shownkeen R."/>
            <person name="Sims S.K."/>
            <person name="Skuce C.D."/>
            <person name="Smith M."/>
            <person name="Steward C.A."/>
            <person name="Swarbreck D."/>
            <person name="Sycamore N."/>
            <person name="Tester J."/>
            <person name="Thorpe A."/>
            <person name="Tracey A."/>
            <person name="Tromans A."/>
            <person name="Thomas D.W."/>
            <person name="Wall M."/>
            <person name="Wallis J.M."/>
            <person name="West A.P."/>
            <person name="Whitehead S.L."/>
            <person name="Willey D.L."/>
            <person name="Williams S.A."/>
            <person name="Wilming L."/>
            <person name="Wray P.W."/>
            <person name="Young L."/>
            <person name="Ashurst J.L."/>
            <person name="Coulson A."/>
            <person name="Blocker H."/>
            <person name="Durbin R.M."/>
            <person name="Sulston J.E."/>
            <person name="Hubbard T."/>
            <person name="Jackson M.J."/>
            <person name="Bentley D.R."/>
            <person name="Beck S."/>
            <person name="Rogers J."/>
            <person name="Dunham I."/>
        </authorList>
    </citation>
    <scope>NUCLEOTIDE SEQUENCE [LARGE SCALE GENOMIC DNA]</scope>
</reference>
<reference key="4">
    <citation type="submission" date="2005-07" db="EMBL/GenBank/DDBJ databases">
        <authorList>
            <person name="Mural R.J."/>
            <person name="Istrail S."/>
            <person name="Sutton G.G."/>
            <person name="Florea L."/>
            <person name="Halpern A.L."/>
            <person name="Mobarry C.M."/>
            <person name="Lippert R."/>
            <person name="Walenz B."/>
            <person name="Shatkay H."/>
            <person name="Dew I."/>
            <person name="Miller J.R."/>
            <person name="Flanigan M.J."/>
            <person name="Edwards N.J."/>
            <person name="Bolanos R."/>
            <person name="Fasulo D."/>
            <person name="Halldorsson B.V."/>
            <person name="Hannenhalli S."/>
            <person name="Turner R."/>
            <person name="Yooseph S."/>
            <person name="Lu F."/>
            <person name="Nusskern D.R."/>
            <person name="Shue B.C."/>
            <person name="Zheng X.H."/>
            <person name="Zhong F."/>
            <person name="Delcher A.L."/>
            <person name="Huson D.H."/>
            <person name="Kravitz S.A."/>
            <person name="Mouchard L."/>
            <person name="Reinert K."/>
            <person name="Remington K.A."/>
            <person name="Clark A.G."/>
            <person name="Waterman M.S."/>
            <person name="Eichler E.E."/>
            <person name="Adams M.D."/>
            <person name="Hunkapiller M.W."/>
            <person name="Myers E.W."/>
            <person name="Venter J.C."/>
        </authorList>
    </citation>
    <scope>NUCLEOTIDE SEQUENCE [LARGE SCALE GENOMIC DNA]</scope>
</reference>
<reference key="5">
    <citation type="journal article" date="2004" name="Genome Res.">
        <title>The status, quality, and expansion of the NIH full-length cDNA project: the Mammalian Gene Collection (MGC).</title>
        <authorList>
            <consortium name="The MGC Project Team"/>
        </authorList>
    </citation>
    <scope>NUCLEOTIDE SEQUENCE [LARGE SCALE MRNA]</scope>
    <source>
        <tissue>Lung</tissue>
    </source>
</reference>
<reference key="6">
    <citation type="journal article" date="1994" name="J. Biol. Chem.">
        <title>Cell-specific translational control of transcription factor BTEB expression. The role of an upstream AUG in the 5'-untranslated region.</title>
        <authorList>
            <person name="Imataka H."/>
            <person name="Nakayama K."/>
            <person name="Yasumoto K."/>
            <person name="Mizuno A."/>
            <person name="Fujii-Kuriyama Y."/>
            <person name="Hayami M."/>
        </authorList>
    </citation>
    <scope>NUCLEOTIDE SEQUENCE [MRNA] OF 1-31</scope>
</reference>
<reference key="7">
    <citation type="journal article" date="2012" name="Proc. Natl. Acad. Sci. U.S.A.">
        <title>Kruppel-like factor 9 is a circadian transcription factor in human epidermis that controls proliferation of keratinocytes.</title>
        <authorList>
            <person name="Sporl F."/>
            <person name="Korge S."/>
            <person name="Jurchott K."/>
            <person name="Wunderskirchner M."/>
            <person name="Schellenberg K."/>
            <person name="Heins S."/>
            <person name="Specht A."/>
            <person name="Stoll C."/>
            <person name="Klemz R."/>
            <person name="Maier B."/>
            <person name="Wenck H."/>
            <person name="Schrader A."/>
            <person name="Kunz D."/>
            <person name="Blatt T."/>
            <person name="Kramer A."/>
        </authorList>
    </citation>
    <scope>FUNCTION</scope>
    <scope>SUBCELLULAR LOCATION</scope>
    <scope>TISSUE SPECIFICITY</scope>
    <scope>INDUCTION</scope>
</reference>
<reference key="8">
    <citation type="journal article" date="2013" name="J. Proteome Res.">
        <title>Toward a comprehensive characterization of a human cancer cell phosphoproteome.</title>
        <authorList>
            <person name="Zhou H."/>
            <person name="Di Palma S."/>
            <person name="Preisinger C."/>
            <person name="Peng M."/>
            <person name="Polat A.N."/>
            <person name="Heck A.J."/>
            <person name="Mohammed S."/>
        </authorList>
    </citation>
    <scope>PHOSPHORYLATION [LARGE SCALE ANALYSIS] AT SER-122</scope>
    <scope>IDENTIFICATION BY MASS SPECTROMETRY [LARGE SCALE ANALYSIS]</scope>
    <source>
        <tissue>Erythroleukemia</tissue>
    </source>
</reference>
<reference key="9">
    <citation type="journal article" date="2014" name="J. Proteomics">
        <title>An enzyme assisted RP-RPLC approach for in-depth analysis of human liver phosphoproteome.</title>
        <authorList>
            <person name="Bian Y."/>
            <person name="Song C."/>
            <person name="Cheng K."/>
            <person name="Dong M."/>
            <person name="Wang F."/>
            <person name="Huang J."/>
            <person name="Sun D."/>
            <person name="Wang L."/>
            <person name="Ye M."/>
            <person name="Zou H."/>
        </authorList>
    </citation>
    <scope>IDENTIFICATION BY MASS SPECTROMETRY [LARGE SCALE ANALYSIS]</scope>
    <source>
        <tissue>Liver</tissue>
    </source>
</reference>
<reference key="10">
    <citation type="journal article" date="2021" name="J. Mol. Biol.">
        <title>ZZEF1 is a Histone Reader and Transcriptional Coregulator of Krueppel-Like Factors.</title>
        <authorList>
            <person name="Yu Y."/>
            <person name="Tencer A."/>
            <person name="Xuan H."/>
            <person name="Kutateladze T.G."/>
            <person name="Shi X."/>
        </authorList>
    </citation>
    <scope>INTERACTION WITH ZZEF1</scope>
</reference>
<comment type="function">
    <text evidence="3">Transcription factor that binds to GC box promoter elements. Selectively activates mRNA synthesis from genes containing tandem repeats of GC boxes but represses genes with a single GC box. Acts as an epidermal circadian transcription factor regulating keratinocyte proliferation (PubMed:22711835).</text>
</comment>
<comment type="subunit">
    <text evidence="4">Interacts with ZZEF1.</text>
</comment>
<comment type="subcellular location">
    <subcellularLocation>
        <location evidence="3">Nucleus</location>
    </subcellularLocation>
</comment>
<comment type="tissue specificity">
    <text evidence="3">Epidermis (at protein level).</text>
</comment>
<comment type="induction">
    <text evidence="3">Expression is highly sensitive to glucocorticoids and shows diurnal expression patterns. A strong induction of expression seen during keratinocyte differentiation in a cortisol dependent manner.</text>
</comment>
<comment type="similarity">
    <text evidence="5">Belongs to the Sp1 C2H2-type zinc-finger protein family.</text>
</comment>
<name>KLF9_HUMAN</name>
<keyword id="KW-0090">Biological rhythms</keyword>
<keyword id="KW-0238">DNA-binding</keyword>
<keyword id="KW-0479">Metal-binding</keyword>
<keyword id="KW-0539">Nucleus</keyword>
<keyword id="KW-0597">Phosphoprotein</keyword>
<keyword id="KW-1267">Proteomics identification</keyword>
<keyword id="KW-1185">Reference proteome</keyword>
<keyword id="KW-0677">Repeat</keyword>
<keyword id="KW-0804">Transcription</keyword>
<keyword id="KW-0805">Transcription regulation</keyword>
<keyword id="KW-0862">Zinc</keyword>
<keyword id="KW-0863">Zinc-finger</keyword>
<proteinExistence type="evidence at protein level"/>
<gene>
    <name type="primary">KLF9</name>
    <name type="synonym">BTEB</name>
    <name type="synonym">BTEB1</name>
</gene>
<protein>
    <recommendedName>
        <fullName>Krueppel-like factor 9</fullName>
    </recommendedName>
    <alternativeName>
        <fullName>Basic transcription element-binding protein 1</fullName>
        <shortName>BTE-binding protein 1</shortName>
    </alternativeName>
    <alternativeName>
        <fullName>GC-box-binding protein 1</fullName>
    </alternativeName>
    <alternativeName>
        <fullName>Transcription factor BTEB1</fullName>
    </alternativeName>
</protein>
<organism>
    <name type="scientific">Homo sapiens</name>
    <name type="common">Human</name>
    <dbReference type="NCBI Taxonomy" id="9606"/>
    <lineage>
        <taxon>Eukaryota</taxon>
        <taxon>Metazoa</taxon>
        <taxon>Chordata</taxon>
        <taxon>Craniata</taxon>
        <taxon>Vertebrata</taxon>
        <taxon>Euteleostomi</taxon>
        <taxon>Mammalia</taxon>
        <taxon>Eutheria</taxon>
        <taxon>Euarchontoglires</taxon>
        <taxon>Primates</taxon>
        <taxon>Haplorrhini</taxon>
        <taxon>Catarrhini</taxon>
        <taxon>Hominidae</taxon>
        <taxon>Homo</taxon>
    </lineage>
</organism>
<feature type="chain" id="PRO_0000047154" description="Krueppel-like factor 9">
    <location>
        <begin position="1"/>
        <end position="244"/>
    </location>
</feature>
<feature type="zinc finger region" description="C2H2-type 1" evidence="1">
    <location>
        <begin position="143"/>
        <end position="167"/>
    </location>
</feature>
<feature type="zinc finger region" description="C2H2-type 2" evidence="1">
    <location>
        <begin position="173"/>
        <end position="197"/>
    </location>
</feature>
<feature type="zinc finger region" description="C2H2-type 3" evidence="1">
    <location>
        <begin position="203"/>
        <end position="225"/>
    </location>
</feature>
<feature type="region of interest" description="Disordered" evidence="2">
    <location>
        <begin position="80"/>
        <end position="142"/>
    </location>
</feature>
<feature type="modified residue" description="Phosphoserine" evidence="6">
    <location>
        <position position="122"/>
    </location>
</feature>